<keyword id="KW-1185">Reference proteome</keyword>
<protein>
    <recommendedName>
        <fullName>Uncharacterized protein YoaC</fullName>
    </recommendedName>
</protein>
<evidence type="ECO:0000305" key="1"/>
<organism>
    <name type="scientific">Shigella flexneri</name>
    <dbReference type="NCBI Taxonomy" id="623"/>
    <lineage>
        <taxon>Bacteria</taxon>
        <taxon>Pseudomonadati</taxon>
        <taxon>Pseudomonadota</taxon>
        <taxon>Gammaproteobacteria</taxon>
        <taxon>Enterobacterales</taxon>
        <taxon>Enterobacteriaceae</taxon>
        <taxon>Shigella</taxon>
    </lineage>
</organism>
<accession>P64492</accession>
<accession>P76259</accession>
<proteinExistence type="predicted"/>
<comment type="sequence caution" evidence="1">
    <conflict type="erroneous initiation">
        <sequence resource="EMBL-CDS" id="AAN43019"/>
    </conflict>
</comment>
<comment type="sequence caution" evidence="1">
    <conflict type="erroneous initiation">
        <sequence resource="EMBL-CDS" id="AAP16914"/>
    </conflict>
</comment>
<name>YOAC_SHIFL</name>
<feature type="chain" id="PRO_0000169032" description="Uncharacterized protein YoaC">
    <location>
        <begin position="1"/>
        <end position="99"/>
    </location>
</feature>
<sequence>MPAVIDKALDFIGAMDVSAPTPSSMNESTAKGIFKYLKELGVPASAADITARADQEGWNPGFTEKMVGWAKKMETGERSVIKNPEYFSTYMQEELKALV</sequence>
<reference key="1">
    <citation type="journal article" date="2002" name="Nucleic Acids Res.">
        <title>Genome sequence of Shigella flexneri 2a: insights into pathogenicity through comparison with genomes of Escherichia coli K12 and O157.</title>
        <authorList>
            <person name="Jin Q."/>
            <person name="Yuan Z."/>
            <person name="Xu J."/>
            <person name="Wang Y."/>
            <person name="Shen Y."/>
            <person name="Lu W."/>
            <person name="Wang J."/>
            <person name="Liu H."/>
            <person name="Yang J."/>
            <person name="Yang F."/>
            <person name="Zhang X."/>
            <person name="Zhang J."/>
            <person name="Yang G."/>
            <person name="Wu H."/>
            <person name="Qu D."/>
            <person name="Dong J."/>
            <person name="Sun L."/>
            <person name="Xue Y."/>
            <person name="Zhao A."/>
            <person name="Gao Y."/>
            <person name="Zhu J."/>
            <person name="Kan B."/>
            <person name="Ding K."/>
            <person name="Chen S."/>
            <person name="Cheng H."/>
            <person name="Yao Z."/>
            <person name="He B."/>
            <person name="Chen R."/>
            <person name="Ma D."/>
            <person name="Qiang B."/>
            <person name="Wen Y."/>
            <person name="Hou Y."/>
            <person name="Yu J."/>
        </authorList>
    </citation>
    <scope>NUCLEOTIDE SEQUENCE [LARGE SCALE GENOMIC DNA]</scope>
    <source>
        <strain>301 / Serotype 2a</strain>
    </source>
</reference>
<reference key="2">
    <citation type="journal article" date="2003" name="Infect. Immun.">
        <title>Complete genome sequence and comparative genomics of Shigella flexneri serotype 2a strain 2457T.</title>
        <authorList>
            <person name="Wei J."/>
            <person name="Goldberg M.B."/>
            <person name="Burland V."/>
            <person name="Venkatesan M.M."/>
            <person name="Deng W."/>
            <person name="Fournier G."/>
            <person name="Mayhew G.F."/>
            <person name="Plunkett G. III"/>
            <person name="Rose D.J."/>
            <person name="Darling A."/>
            <person name="Mau B."/>
            <person name="Perna N.T."/>
            <person name="Payne S.M."/>
            <person name="Runyen-Janecky L.J."/>
            <person name="Zhou S."/>
            <person name="Schwartz D.C."/>
            <person name="Blattner F.R."/>
        </authorList>
    </citation>
    <scope>NUCLEOTIDE SEQUENCE [LARGE SCALE GENOMIC DNA]</scope>
    <source>
        <strain>ATCC 700930 / 2457T / Serotype 2a</strain>
    </source>
</reference>
<dbReference type="EMBL" id="AE005674">
    <property type="protein sequence ID" value="AAN43019.1"/>
    <property type="status" value="ALT_INIT"/>
    <property type="molecule type" value="Genomic_DNA"/>
</dbReference>
<dbReference type="EMBL" id="AE014073">
    <property type="protein sequence ID" value="AAP16914.1"/>
    <property type="status" value="ALT_INIT"/>
    <property type="molecule type" value="Genomic_DNA"/>
</dbReference>
<dbReference type="RefSeq" id="NP_707312.1">
    <property type="nucleotide sequence ID" value="NC_004337.2"/>
</dbReference>
<dbReference type="RefSeq" id="WP_001111995.1">
    <property type="nucleotide sequence ID" value="NZ_WPGW01000062.1"/>
</dbReference>
<dbReference type="SMR" id="P64492"/>
<dbReference type="STRING" id="198214.SF1418"/>
<dbReference type="PaxDb" id="198214-SF1418"/>
<dbReference type="GeneID" id="1024634"/>
<dbReference type="KEGG" id="sfl:SF1418"/>
<dbReference type="KEGG" id="sfx:S1533"/>
<dbReference type="PATRIC" id="fig|198214.7.peg.1670"/>
<dbReference type="HOGENOM" id="CLU_175366_0_0_6"/>
<dbReference type="Proteomes" id="UP000001006">
    <property type="component" value="Chromosome"/>
</dbReference>
<dbReference type="Proteomes" id="UP000002673">
    <property type="component" value="Chromosome"/>
</dbReference>
<dbReference type="Gene3D" id="1.20.1290.30">
    <property type="match status" value="1"/>
</dbReference>
<dbReference type="InterPro" id="IPR015079">
    <property type="entry name" value="DUF1889"/>
</dbReference>
<dbReference type="InterPro" id="IPR037210">
    <property type="entry name" value="YoaC-like_sf"/>
</dbReference>
<dbReference type="Pfam" id="PF08986">
    <property type="entry name" value="DUF1889"/>
    <property type="match status" value="1"/>
</dbReference>
<dbReference type="SUPFAM" id="SSF140670">
    <property type="entry name" value="YoaC-like"/>
    <property type="match status" value="1"/>
</dbReference>
<gene>
    <name type="primary">yoaC</name>
    <name type="ordered locus">SF1418</name>
    <name type="ordered locus">S1533</name>
</gene>